<gene>
    <name evidence="1" type="primary">glmU</name>
    <name type="ordered locus">NFA_48780</name>
</gene>
<organism>
    <name type="scientific">Nocardia farcinica (strain IFM 10152)</name>
    <dbReference type="NCBI Taxonomy" id="247156"/>
    <lineage>
        <taxon>Bacteria</taxon>
        <taxon>Bacillati</taxon>
        <taxon>Actinomycetota</taxon>
        <taxon>Actinomycetes</taxon>
        <taxon>Mycobacteriales</taxon>
        <taxon>Nocardiaceae</taxon>
        <taxon>Nocardia</taxon>
    </lineage>
</organism>
<evidence type="ECO:0000255" key="1">
    <source>
        <dbReference type="HAMAP-Rule" id="MF_01631"/>
    </source>
</evidence>
<evidence type="ECO:0000256" key="2">
    <source>
        <dbReference type="SAM" id="MobiDB-lite"/>
    </source>
</evidence>
<proteinExistence type="inferred from homology"/>
<feature type="chain" id="PRO_0000233809" description="Bifunctional protein GlmU">
    <location>
        <begin position="1"/>
        <end position="495"/>
    </location>
</feature>
<feature type="region of interest" description="Pyrophosphorylase" evidence="1">
    <location>
        <begin position="1"/>
        <end position="241"/>
    </location>
</feature>
<feature type="region of interest" description="Linker" evidence="1">
    <location>
        <begin position="242"/>
        <end position="262"/>
    </location>
</feature>
<feature type="region of interest" description="N-acetyltransferase" evidence="1">
    <location>
        <begin position="263"/>
        <end position="495"/>
    </location>
</feature>
<feature type="region of interest" description="Disordered" evidence="2">
    <location>
        <begin position="467"/>
        <end position="495"/>
    </location>
</feature>
<feature type="compositionally biased region" description="Low complexity" evidence="2">
    <location>
        <begin position="468"/>
        <end position="479"/>
    </location>
</feature>
<feature type="compositionally biased region" description="Basic and acidic residues" evidence="2">
    <location>
        <begin position="480"/>
        <end position="495"/>
    </location>
</feature>
<feature type="active site" description="Proton acceptor" evidence="1">
    <location>
        <position position="374"/>
    </location>
</feature>
<feature type="binding site" evidence="1">
    <location>
        <begin position="10"/>
        <end position="13"/>
    </location>
    <ligand>
        <name>UDP-N-acetyl-alpha-D-glucosamine</name>
        <dbReference type="ChEBI" id="CHEBI:57705"/>
    </ligand>
</feature>
<feature type="binding site" evidence="1">
    <location>
        <position position="24"/>
    </location>
    <ligand>
        <name>UDP-N-acetyl-alpha-D-glucosamine</name>
        <dbReference type="ChEBI" id="CHEBI:57705"/>
    </ligand>
</feature>
<feature type="binding site" evidence="1">
    <location>
        <position position="81"/>
    </location>
    <ligand>
        <name>UDP-N-acetyl-alpha-D-glucosamine</name>
        <dbReference type="ChEBI" id="CHEBI:57705"/>
    </ligand>
</feature>
<feature type="binding site" evidence="1">
    <location>
        <begin position="86"/>
        <end position="87"/>
    </location>
    <ligand>
        <name>UDP-N-acetyl-alpha-D-glucosamine</name>
        <dbReference type="ChEBI" id="CHEBI:57705"/>
    </ligand>
</feature>
<feature type="binding site" evidence="1">
    <location>
        <position position="112"/>
    </location>
    <ligand>
        <name>Mg(2+)</name>
        <dbReference type="ChEBI" id="CHEBI:18420"/>
    </ligand>
</feature>
<feature type="binding site" evidence="1">
    <location>
        <position position="151"/>
    </location>
    <ligand>
        <name>UDP-N-acetyl-alpha-D-glucosamine</name>
        <dbReference type="ChEBI" id="CHEBI:57705"/>
    </ligand>
</feature>
<feature type="binding site" evidence="1">
    <location>
        <position position="166"/>
    </location>
    <ligand>
        <name>UDP-N-acetyl-alpha-D-glucosamine</name>
        <dbReference type="ChEBI" id="CHEBI:57705"/>
    </ligand>
</feature>
<feature type="binding site" evidence="1">
    <location>
        <position position="181"/>
    </location>
    <ligand>
        <name>UDP-N-acetyl-alpha-D-glucosamine</name>
        <dbReference type="ChEBI" id="CHEBI:57705"/>
    </ligand>
</feature>
<feature type="binding site" evidence="1">
    <location>
        <position position="239"/>
    </location>
    <ligand>
        <name>Mg(2+)</name>
        <dbReference type="ChEBI" id="CHEBI:18420"/>
    </ligand>
</feature>
<feature type="binding site" evidence="1">
    <location>
        <position position="239"/>
    </location>
    <ligand>
        <name>UDP-N-acetyl-alpha-D-glucosamine</name>
        <dbReference type="ChEBI" id="CHEBI:57705"/>
    </ligand>
</feature>
<feature type="binding site" evidence="1">
    <location>
        <position position="344"/>
    </location>
    <ligand>
        <name>UDP-N-acetyl-alpha-D-glucosamine</name>
        <dbReference type="ChEBI" id="CHEBI:57705"/>
    </ligand>
</feature>
<feature type="binding site" evidence="1">
    <location>
        <position position="362"/>
    </location>
    <ligand>
        <name>UDP-N-acetyl-alpha-D-glucosamine</name>
        <dbReference type="ChEBI" id="CHEBI:57705"/>
    </ligand>
</feature>
<feature type="binding site" evidence="1">
    <location>
        <position position="377"/>
    </location>
    <ligand>
        <name>UDP-N-acetyl-alpha-D-glucosamine</name>
        <dbReference type="ChEBI" id="CHEBI:57705"/>
    </ligand>
</feature>
<feature type="binding site" evidence="1">
    <location>
        <position position="388"/>
    </location>
    <ligand>
        <name>UDP-N-acetyl-alpha-D-glucosamine</name>
        <dbReference type="ChEBI" id="CHEBI:57705"/>
    </ligand>
</feature>
<feature type="binding site" evidence="1">
    <location>
        <position position="391"/>
    </location>
    <ligand>
        <name>acetyl-CoA</name>
        <dbReference type="ChEBI" id="CHEBI:57288"/>
    </ligand>
</feature>
<feature type="binding site" evidence="1">
    <location>
        <begin position="397"/>
        <end position="398"/>
    </location>
    <ligand>
        <name>acetyl-CoA</name>
        <dbReference type="ChEBI" id="CHEBI:57288"/>
    </ligand>
</feature>
<feature type="binding site" evidence="1">
    <location>
        <position position="416"/>
    </location>
    <ligand>
        <name>acetyl-CoA</name>
        <dbReference type="ChEBI" id="CHEBI:57288"/>
    </ligand>
</feature>
<feature type="binding site" evidence="1">
    <location>
        <position position="434"/>
    </location>
    <ligand>
        <name>acetyl-CoA</name>
        <dbReference type="ChEBI" id="CHEBI:57288"/>
    </ligand>
</feature>
<accession>Q5YQ11</accession>
<sequence length="495" mass="51718">MPQQTAVVVLAAGAGTRMRSKTPKVLHSLAGRSMLAHALHAANEIDPTHLITVVGHDREQVGAAVAAVAGELGREIVPALQEQQLGTGHAVQCALRALPADFAGDLLVTSADVPLLDGHTLGALLDEHRSYQERSAVTVLTFVPDDPNGYGRIVRDADGQVVEIVEHADATPEQAAITEVNSGVYAFDATVLRAMIGRLSTANAQHELYLTDVLRLAREAGHPVHGARLLDAAKVTGVNDRVQLSIATRTMNRYILERHMRAGVTIIDPASTWVDAGVRIGRDAVLRPGVQLLGSTVIGEDAEIGPDSTLTDVRVGDGAKVVRTHGEGATIGPNASVGPFAYLRPGTILGEAGKLGAFVETKNADIGAHSKVPHLTYVGDATIGEHSNIGASSVFVNYDGVKKHHTVVGSHVRTGSDTMFVAPVTVGDGAYTAAGTVLRRNVPPGALAVSGGPQKNIENWVQRHRPGTAAATAAAQALAADEKSSQATEQKDGEQ</sequence>
<reference key="1">
    <citation type="journal article" date="2004" name="Proc. Natl. Acad. Sci. U.S.A.">
        <title>The complete genomic sequence of Nocardia farcinica IFM 10152.</title>
        <authorList>
            <person name="Ishikawa J."/>
            <person name="Yamashita A."/>
            <person name="Mikami Y."/>
            <person name="Hoshino Y."/>
            <person name="Kurita H."/>
            <person name="Hotta K."/>
            <person name="Shiba T."/>
            <person name="Hattori M."/>
        </authorList>
    </citation>
    <scope>NUCLEOTIDE SEQUENCE [LARGE SCALE GENOMIC DNA]</scope>
    <source>
        <strain>IFM 10152</strain>
    </source>
</reference>
<comment type="function">
    <text evidence="1">Catalyzes the last two sequential reactions in the de novo biosynthetic pathway for UDP-N-acetylglucosamine (UDP-GlcNAc). The C-terminal domain catalyzes the transfer of acetyl group from acetyl coenzyme A to glucosamine-1-phosphate (GlcN-1-P) to produce N-acetylglucosamine-1-phosphate (GlcNAc-1-P), which is converted into UDP-GlcNAc by the transfer of uridine 5-monophosphate (from uridine 5-triphosphate), a reaction catalyzed by the N-terminal domain.</text>
</comment>
<comment type="catalytic activity">
    <reaction evidence="1">
        <text>alpha-D-glucosamine 1-phosphate + acetyl-CoA = N-acetyl-alpha-D-glucosamine 1-phosphate + CoA + H(+)</text>
        <dbReference type="Rhea" id="RHEA:13725"/>
        <dbReference type="ChEBI" id="CHEBI:15378"/>
        <dbReference type="ChEBI" id="CHEBI:57287"/>
        <dbReference type="ChEBI" id="CHEBI:57288"/>
        <dbReference type="ChEBI" id="CHEBI:57776"/>
        <dbReference type="ChEBI" id="CHEBI:58516"/>
        <dbReference type="EC" id="2.3.1.157"/>
    </reaction>
</comment>
<comment type="catalytic activity">
    <reaction evidence="1">
        <text>N-acetyl-alpha-D-glucosamine 1-phosphate + UTP + H(+) = UDP-N-acetyl-alpha-D-glucosamine + diphosphate</text>
        <dbReference type="Rhea" id="RHEA:13509"/>
        <dbReference type="ChEBI" id="CHEBI:15378"/>
        <dbReference type="ChEBI" id="CHEBI:33019"/>
        <dbReference type="ChEBI" id="CHEBI:46398"/>
        <dbReference type="ChEBI" id="CHEBI:57705"/>
        <dbReference type="ChEBI" id="CHEBI:57776"/>
        <dbReference type="EC" id="2.7.7.23"/>
    </reaction>
</comment>
<comment type="cofactor">
    <cofactor evidence="1">
        <name>Mg(2+)</name>
        <dbReference type="ChEBI" id="CHEBI:18420"/>
    </cofactor>
    <text evidence="1">Binds 1 Mg(2+) ion per subunit.</text>
</comment>
<comment type="pathway">
    <text evidence="1">Nucleotide-sugar biosynthesis; UDP-N-acetyl-alpha-D-glucosamine biosynthesis; N-acetyl-alpha-D-glucosamine 1-phosphate from alpha-D-glucosamine 6-phosphate (route II): step 2/2.</text>
</comment>
<comment type="pathway">
    <text evidence="1">Nucleotide-sugar biosynthesis; UDP-N-acetyl-alpha-D-glucosamine biosynthesis; UDP-N-acetyl-alpha-D-glucosamine from N-acetyl-alpha-D-glucosamine 1-phosphate: step 1/1.</text>
</comment>
<comment type="pathway">
    <text evidence="1">Bacterial outer membrane biogenesis; LPS lipid A biosynthesis.</text>
</comment>
<comment type="subunit">
    <text evidence="1">Homotrimer.</text>
</comment>
<comment type="subcellular location">
    <subcellularLocation>
        <location evidence="1">Cytoplasm</location>
    </subcellularLocation>
</comment>
<comment type="similarity">
    <text evidence="1">In the N-terminal section; belongs to the N-acetylglucosamine-1-phosphate uridyltransferase family.</text>
</comment>
<comment type="similarity">
    <text evidence="1">In the C-terminal section; belongs to the transferase hexapeptide repeat family.</text>
</comment>
<keyword id="KW-0012">Acyltransferase</keyword>
<keyword id="KW-0133">Cell shape</keyword>
<keyword id="KW-0961">Cell wall biogenesis/degradation</keyword>
<keyword id="KW-0963">Cytoplasm</keyword>
<keyword id="KW-0460">Magnesium</keyword>
<keyword id="KW-0479">Metal-binding</keyword>
<keyword id="KW-0511">Multifunctional enzyme</keyword>
<keyword id="KW-0548">Nucleotidyltransferase</keyword>
<keyword id="KW-0573">Peptidoglycan synthesis</keyword>
<keyword id="KW-1185">Reference proteome</keyword>
<keyword id="KW-0677">Repeat</keyword>
<keyword id="KW-0808">Transferase</keyword>
<name>GLMU_NOCFA</name>
<dbReference type="EC" id="2.7.7.23" evidence="1"/>
<dbReference type="EC" id="2.3.1.157" evidence="1"/>
<dbReference type="EMBL" id="AP006618">
    <property type="protein sequence ID" value="BAD59730.1"/>
    <property type="molecule type" value="Genomic_DNA"/>
</dbReference>
<dbReference type="RefSeq" id="WP_011211413.1">
    <property type="nucleotide sequence ID" value="NC_006361.1"/>
</dbReference>
<dbReference type="SMR" id="Q5YQ11"/>
<dbReference type="STRING" id="247156.NFA_48780"/>
<dbReference type="GeneID" id="61135475"/>
<dbReference type="KEGG" id="nfa:NFA_48780"/>
<dbReference type="eggNOG" id="COG1207">
    <property type="taxonomic scope" value="Bacteria"/>
</dbReference>
<dbReference type="HOGENOM" id="CLU_029499_15_2_11"/>
<dbReference type="OrthoDB" id="9775031at2"/>
<dbReference type="UniPathway" id="UPA00113">
    <property type="reaction ID" value="UER00532"/>
</dbReference>
<dbReference type="UniPathway" id="UPA00113">
    <property type="reaction ID" value="UER00533"/>
</dbReference>
<dbReference type="UniPathway" id="UPA00973"/>
<dbReference type="Proteomes" id="UP000006820">
    <property type="component" value="Chromosome"/>
</dbReference>
<dbReference type="GO" id="GO:0005737">
    <property type="term" value="C:cytoplasm"/>
    <property type="evidence" value="ECO:0007669"/>
    <property type="project" value="UniProtKB-SubCell"/>
</dbReference>
<dbReference type="GO" id="GO:0016020">
    <property type="term" value="C:membrane"/>
    <property type="evidence" value="ECO:0007669"/>
    <property type="project" value="GOC"/>
</dbReference>
<dbReference type="GO" id="GO:0019134">
    <property type="term" value="F:glucosamine-1-phosphate N-acetyltransferase activity"/>
    <property type="evidence" value="ECO:0007669"/>
    <property type="project" value="UniProtKB-UniRule"/>
</dbReference>
<dbReference type="GO" id="GO:0000287">
    <property type="term" value="F:magnesium ion binding"/>
    <property type="evidence" value="ECO:0007669"/>
    <property type="project" value="UniProtKB-UniRule"/>
</dbReference>
<dbReference type="GO" id="GO:0003977">
    <property type="term" value="F:UDP-N-acetylglucosamine diphosphorylase activity"/>
    <property type="evidence" value="ECO:0007669"/>
    <property type="project" value="UniProtKB-UniRule"/>
</dbReference>
<dbReference type="GO" id="GO:0000902">
    <property type="term" value="P:cell morphogenesis"/>
    <property type="evidence" value="ECO:0007669"/>
    <property type="project" value="UniProtKB-UniRule"/>
</dbReference>
<dbReference type="GO" id="GO:0071555">
    <property type="term" value="P:cell wall organization"/>
    <property type="evidence" value="ECO:0007669"/>
    <property type="project" value="UniProtKB-KW"/>
</dbReference>
<dbReference type="GO" id="GO:0009245">
    <property type="term" value="P:lipid A biosynthetic process"/>
    <property type="evidence" value="ECO:0007669"/>
    <property type="project" value="UniProtKB-UniRule"/>
</dbReference>
<dbReference type="GO" id="GO:0009252">
    <property type="term" value="P:peptidoglycan biosynthetic process"/>
    <property type="evidence" value="ECO:0007669"/>
    <property type="project" value="UniProtKB-UniRule"/>
</dbReference>
<dbReference type="GO" id="GO:0008360">
    <property type="term" value="P:regulation of cell shape"/>
    <property type="evidence" value="ECO:0007669"/>
    <property type="project" value="UniProtKB-KW"/>
</dbReference>
<dbReference type="GO" id="GO:0006048">
    <property type="term" value="P:UDP-N-acetylglucosamine biosynthetic process"/>
    <property type="evidence" value="ECO:0007669"/>
    <property type="project" value="UniProtKB-UniPathway"/>
</dbReference>
<dbReference type="CDD" id="cd02540">
    <property type="entry name" value="GT2_GlmU_N_bac"/>
    <property type="match status" value="1"/>
</dbReference>
<dbReference type="CDD" id="cd03353">
    <property type="entry name" value="LbH_GlmU_C"/>
    <property type="match status" value="1"/>
</dbReference>
<dbReference type="Gene3D" id="2.160.10.10">
    <property type="entry name" value="Hexapeptide repeat proteins"/>
    <property type="match status" value="1"/>
</dbReference>
<dbReference type="Gene3D" id="3.90.550.10">
    <property type="entry name" value="Spore Coat Polysaccharide Biosynthesis Protein SpsA, Chain A"/>
    <property type="match status" value="1"/>
</dbReference>
<dbReference type="HAMAP" id="MF_01631">
    <property type="entry name" value="GlmU"/>
    <property type="match status" value="1"/>
</dbReference>
<dbReference type="InterPro" id="IPR005882">
    <property type="entry name" value="Bifunctional_GlmU"/>
</dbReference>
<dbReference type="InterPro" id="IPR050065">
    <property type="entry name" value="GlmU-like"/>
</dbReference>
<dbReference type="InterPro" id="IPR038009">
    <property type="entry name" value="GlmU_C_LbH"/>
</dbReference>
<dbReference type="InterPro" id="IPR005835">
    <property type="entry name" value="NTP_transferase_dom"/>
</dbReference>
<dbReference type="InterPro" id="IPR029044">
    <property type="entry name" value="Nucleotide-diphossugar_trans"/>
</dbReference>
<dbReference type="InterPro" id="IPR011004">
    <property type="entry name" value="Trimer_LpxA-like_sf"/>
</dbReference>
<dbReference type="NCBIfam" id="TIGR01173">
    <property type="entry name" value="glmU"/>
    <property type="match status" value="1"/>
</dbReference>
<dbReference type="NCBIfam" id="NF010932">
    <property type="entry name" value="PRK14352.1"/>
    <property type="match status" value="1"/>
</dbReference>
<dbReference type="PANTHER" id="PTHR43584:SF3">
    <property type="entry name" value="BIFUNCTIONAL PROTEIN GLMU"/>
    <property type="match status" value="1"/>
</dbReference>
<dbReference type="PANTHER" id="PTHR43584">
    <property type="entry name" value="NUCLEOTIDYL TRANSFERASE"/>
    <property type="match status" value="1"/>
</dbReference>
<dbReference type="Pfam" id="PF00483">
    <property type="entry name" value="NTP_transferase"/>
    <property type="match status" value="1"/>
</dbReference>
<dbReference type="SUPFAM" id="SSF53448">
    <property type="entry name" value="Nucleotide-diphospho-sugar transferases"/>
    <property type="match status" value="1"/>
</dbReference>
<dbReference type="SUPFAM" id="SSF51161">
    <property type="entry name" value="Trimeric LpxA-like enzymes"/>
    <property type="match status" value="1"/>
</dbReference>
<protein>
    <recommendedName>
        <fullName evidence="1">Bifunctional protein GlmU</fullName>
    </recommendedName>
    <domain>
        <recommendedName>
            <fullName evidence="1">UDP-N-acetylglucosamine pyrophosphorylase</fullName>
            <ecNumber evidence="1">2.7.7.23</ecNumber>
        </recommendedName>
        <alternativeName>
            <fullName evidence="1">N-acetylglucosamine-1-phosphate uridyltransferase</fullName>
        </alternativeName>
    </domain>
    <domain>
        <recommendedName>
            <fullName evidence="1">Glucosamine-1-phosphate N-acetyltransferase</fullName>
            <ecNumber evidence="1">2.3.1.157</ecNumber>
        </recommendedName>
    </domain>
</protein>